<evidence type="ECO:0000255" key="1">
    <source>
        <dbReference type="HAMAP-Rule" id="MF_01218"/>
    </source>
</evidence>
<name>UPP_LEGPH</name>
<comment type="function">
    <text evidence="1">Catalyzes the conversion of uracil and 5-phospho-alpha-D-ribose 1-diphosphate (PRPP) to UMP and diphosphate.</text>
</comment>
<comment type="catalytic activity">
    <reaction evidence="1">
        <text>UMP + diphosphate = 5-phospho-alpha-D-ribose 1-diphosphate + uracil</text>
        <dbReference type="Rhea" id="RHEA:13017"/>
        <dbReference type="ChEBI" id="CHEBI:17568"/>
        <dbReference type="ChEBI" id="CHEBI:33019"/>
        <dbReference type="ChEBI" id="CHEBI:57865"/>
        <dbReference type="ChEBI" id="CHEBI:58017"/>
        <dbReference type="EC" id="2.4.2.9"/>
    </reaction>
</comment>
<comment type="cofactor">
    <cofactor evidence="1">
        <name>Mg(2+)</name>
        <dbReference type="ChEBI" id="CHEBI:18420"/>
    </cofactor>
    <text evidence="1">Binds 1 Mg(2+) ion per subunit. The magnesium is bound as Mg-PRPP.</text>
</comment>
<comment type="activity regulation">
    <text evidence="1">Allosterically activated by GTP.</text>
</comment>
<comment type="pathway">
    <text evidence="1">Pyrimidine metabolism; UMP biosynthesis via salvage pathway; UMP from uracil: step 1/1.</text>
</comment>
<comment type="similarity">
    <text evidence="1">Belongs to the UPRTase family.</text>
</comment>
<protein>
    <recommendedName>
        <fullName evidence="1">Uracil phosphoribosyltransferase</fullName>
        <ecNumber evidence="1">2.4.2.9</ecNumber>
    </recommendedName>
    <alternativeName>
        <fullName evidence="1">UMP pyrophosphorylase</fullName>
    </alternativeName>
    <alternativeName>
        <fullName evidence="1">UPRTase</fullName>
    </alternativeName>
</protein>
<feature type="chain" id="PRO_0000120841" description="Uracil phosphoribosyltransferase">
    <location>
        <begin position="1"/>
        <end position="214"/>
    </location>
</feature>
<feature type="binding site" evidence="1">
    <location>
        <position position="81"/>
    </location>
    <ligand>
        <name>5-phospho-alpha-D-ribose 1-diphosphate</name>
        <dbReference type="ChEBI" id="CHEBI:58017"/>
    </ligand>
</feature>
<feature type="binding site" evidence="1">
    <location>
        <position position="106"/>
    </location>
    <ligand>
        <name>5-phospho-alpha-D-ribose 1-diphosphate</name>
        <dbReference type="ChEBI" id="CHEBI:58017"/>
    </ligand>
</feature>
<feature type="binding site" evidence="1">
    <location>
        <begin position="133"/>
        <end position="141"/>
    </location>
    <ligand>
        <name>5-phospho-alpha-D-ribose 1-diphosphate</name>
        <dbReference type="ChEBI" id="CHEBI:58017"/>
    </ligand>
</feature>
<feature type="binding site" evidence="1">
    <location>
        <position position="196"/>
    </location>
    <ligand>
        <name>uracil</name>
        <dbReference type="ChEBI" id="CHEBI:17568"/>
    </ligand>
</feature>
<feature type="binding site" evidence="1">
    <location>
        <begin position="201"/>
        <end position="203"/>
    </location>
    <ligand>
        <name>uracil</name>
        <dbReference type="ChEBI" id="CHEBI:17568"/>
    </ligand>
</feature>
<feature type="binding site" evidence="1">
    <location>
        <position position="202"/>
    </location>
    <ligand>
        <name>5-phospho-alpha-D-ribose 1-diphosphate</name>
        <dbReference type="ChEBI" id="CHEBI:58017"/>
    </ligand>
</feature>
<organism>
    <name type="scientific">Legionella pneumophila subsp. pneumophila (strain Philadelphia 1 / ATCC 33152 / DSM 7513)</name>
    <dbReference type="NCBI Taxonomy" id="272624"/>
    <lineage>
        <taxon>Bacteria</taxon>
        <taxon>Pseudomonadati</taxon>
        <taxon>Pseudomonadota</taxon>
        <taxon>Gammaproteobacteria</taxon>
        <taxon>Legionellales</taxon>
        <taxon>Legionellaceae</taxon>
        <taxon>Legionella</taxon>
    </lineage>
</organism>
<keyword id="KW-0021">Allosteric enzyme</keyword>
<keyword id="KW-0328">Glycosyltransferase</keyword>
<keyword id="KW-0342">GTP-binding</keyword>
<keyword id="KW-0460">Magnesium</keyword>
<keyword id="KW-0547">Nucleotide-binding</keyword>
<keyword id="KW-1185">Reference proteome</keyword>
<keyword id="KW-0808">Transferase</keyword>
<accession>Q5ZTB9</accession>
<sequence>MDFNQVKVINHPLIQHKLTIMRKKETSTVKFRTLMHEVSMLLAYEVTRDLEIEYEEIETPLATMQSPVLKGKKLVFVSILRAGNGLLDGMLQLVPTARIGHIGLYRDPKTLEAVEYYFKLPEHTQDRDVIVVDPMLATGNSAIAAVKEVKALHPKSIKFLCLLASPEGISNFHGEHPDVPIFTAAIDEQLNDHGYIVPGLGDAGDRLYGTKLAH</sequence>
<reference key="1">
    <citation type="journal article" date="2004" name="Science">
        <title>The genomic sequence of the accidental pathogen Legionella pneumophila.</title>
        <authorList>
            <person name="Chien M."/>
            <person name="Morozova I."/>
            <person name="Shi S."/>
            <person name="Sheng H."/>
            <person name="Chen J."/>
            <person name="Gomez S.M."/>
            <person name="Asamani G."/>
            <person name="Hill K."/>
            <person name="Nuara J."/>
            <person name="Feder M."/>
            <person name="Rineer J."/>
            <person name="Greenberg J.J."/>
            <person name="Steshenko V."/>
            <person name="Park S.H."/>
            <person name="Zhao B."/>
            <person name="Teplitskaya E."/>
            <person name="Edwards J.R."/>
            <person name="Pampou S."/>
            <person name="Georghiou A."/>
            <person name="Chou I.-C."/>
            <person name="Iannuccilli W."/>
            <person name="Ulz M.E."/>
            <person name="Kim D.H."/>
            <person name="Geringer-Sameth A."/>
            <person name="Goldsberry C."/>
            <person name="Morozov P."/>
            <person name="Fischer S.G."/>
            <person name="Segal G."/>
            <person name="Qu X."/>
            <person name="Rzhetsky A."/>
            <person name="Zhang P."/>
            <person name="Cayanis E."/>
            <person name="De Jong P.J."/>
            <person name="Ju J."/>
            <person name="Kalachikov S."/>
            <person name="Shuman H.A."/>
            <person name="Russo J.J."/>
        </authorList>
    </citation>
    <scope>NUCLEOTIDE SEQUENCE [LARGE SCALE GENOMIC DNA]</scope>
    <source>
        <strain>Philadelphia 1 / ATCC 33152 / DSM 7513</strain>
    </source>
</reference>
<dbReference type="EC" id="2.4.2.9" evidence="1"/>
<dbReference type="EMBL" id="AE017354">
    <property type="protein sequence ID" value="AAU28308.1"/>
    <property type="molecule type" value="Genomic_DNA"/>
</dbReference>
<dbReference type="RefSeq" id="WP_010947952.1">
    <property type="nucleotide sequence ID" value="NC_002942.5"/>
</dbReference>
<dbReference type="RefSeq" id="YP_096255.1">
    <property type="nucleotide sequence ID" value="NC_002942.5"/>
</dbReference>
<dbReference type="SMR" id="Q5ZTB9"/>
<dbReference type="STRING" id="272624.lpg2243"/>
<dbReference type="PaxDb" id="272624-lpg2243"/>
<dbReference type="GeneID" id="57036236"/>
<dbReference type="KEGG" id="lpn:lpg2243"/>
<dbReference type="PATRIC" id="fig|272624.6.peg.2358"/>
<dbReference type="eggNOG" id="COG0035">
    <property type="taxonomic scope" value="Bacteria"/>
</dbReference>
<dbReference type="HOGENOM" id="CLU_067096_2_2_6"/>
<dbReference type="OrthoDB" id="9781675at2"/>
<dbReference type="UniPathway" id="UPA00574">
    <property type="reaction ID" value="UER00636"/>
</dbReference>
<dbReference type="Proteomes" id="UP000000609">
    <property type="component" value="Chromosome"/>
</dbReference>
<dbReference type="GO" id="GO:0005525">
    <property type="term" value="F:GTP binding"/>
    <property type="evidence" value="ECO:0007669"/>
    <property type="project" value="UniProtKB-KW"/>
</dbReference>
<dbReference type="GO" id="GO:0000287">
    <property type="term" value="F:magnesium ion binding"/>
    <property type="evidence" value="ECO:0007669"/>
    <property type="project" value="UniProtKB-UniRule"/>
</dbReference>
<dbReference type="GO" id="GO:0004845">
    <property type="term" value="F:uracil phosphoribosyltransferase activity"/>
    <property type="evidence" value="ECO:0007669"/>
    <property type="project" value="UniProtKB-UniRule"/>
</dbReference>
<dbReference type="GO" id="GO:0044206">
    <property type="term" value="P:UMP salvage"/>
    <property type="evidence" value="ECO:0007669"/>
    <property type="project" value="UniProtKB-UniRule"/>
</dbReference>
<dbReference type="GO" id="GO:0006223">
    <property type="term" value="P:uracil salvage"/>
    <property type="evidence" value="ECO:0007669"/>
    <property type="project" value="InterPro"/>
</dbReference>
<dbReference type="CDD" id="cd06223">
    <property type="entry name" value="PRTases_typeI"/>
    <property type="match status" value="1"/>
</dbReference>
<dbReference type="FunFam" id="3.40.50.2020:FF:000003">
    <property type="entry name" value="Uracil phosphoribosyltransferase"/>
    <property type="match status" value="1"/>
</dbReference>
<dbReference type="Gene3D" id="3.40.50.2020">
    <property type="match status" value="1"/>
</dbReference>
<dbReference type="HAMAP" id="MF_01218_B">
    <property type="entry name" value="Upp_B"/>
    <property type="match status" value="1"/>
</dbReference>
<dbReference type="InterPro" id="IPR000836">
    <property type="entry name" value="PRibTrfase_dom"/>
</dbReference>
<dbReference type="InterPro" id="IPR029057">
    <property type="entry name" value="PRTase-like"/>
</dbReference>
<dbReference type="InterPro" id="IPR034332">
    <property type="entry name" value="Upp_B"/>
</dbReference>
<dbReference type="InterPro" id="IPR050054">
    <property type="entry name" value="UPRTase/APRTase"/>
</dbReference>
<dbReference type="InterPro" id="IPR005765">
    <property type="entry name" value="Ura_phspho_trans"/>
</dbReference>
<dbReference type="NCBIfam" id="NF001097">
    <property type="entry name" value="PRK00129.1"/>
    <property type="match status" value="1"/>
</dbReference>
<dbReference type="NCBIfam" id="TIGR01091">
    <property type="entry name" value="upp"/>
    <property type="match status" value="1"/>
</dbReference>
<dbReference type="PANTHER" id="PTHR32315">
    <property type="entry name" value="ADENINE PHOSPHORIBOSYLTRANSFERASE"/>
    <property type="match status" value="1"/>
</dbReference>
<dbReference type="PANTHER" id="PTHR32315:SF4">
    <property type="entry name" value="URACIL PHOSPHORIBOSYLTRANSFERASE, CHLOROPLASTIC"/>
    <property type="match status" value="1"/>
</dbReference>
<dbReference type="Pfam" id="PF14681">
    <property type="entry name" value="UPRTase"/>
    <property type="match status" value="1"/>
</dbReference>
<dbReference type="SUPFAM" id="SSF53271">
    <property type="entry name" value="PRTase-like"/>
    <property type="match status" value="1"/>
</dbReference>
<gene>
    <name evidence="1" type="primary">upp</name>
    <name type="ordered locus">lpg2243</name>
</gene>
<proteinExistence type="inferred from homology"/>